<reference key="1">
    <citation type="journal article" date="2005" name="Nucleic Acids Res.">
        <title>Genome dynamics and diversity of Shigella species, the etiologic agents of bacillary dysentery.</title>
        <authorList>
            <person name="Yang F."/>
            <person name="Yang J."/>
            <person name="Zhang X."/>
            <person name="Chen L."/>
            <person name="Jiang Y."/>
            <person name="Yan Y."/>
            <person name="Tang X."/>
            <person name="Wang J."/>
            <person name="Xiong Z."/>
            <person name="Dong J."/>
            <person name="Xue Y."/>
            <person name="Zhu Y."/>
            <person name="Xu X."/>
            <person name="Sun L."/>
            <person name="Chen S."/>
            <person name="Nie H."/>
            <person name="Peng J."/>
            <person name="Xu J."/>
            <person name="Wang Y."/>
            <person name="Yuan Z."/>
            <person name="Wen Y."/>
            <person name="Yao Z."/>
            <person name="Shen Y."/>
            <person name="Qiang B."/>
            <person name="Hou Y."/>
            <person name="Yu J."/>
            <person name="Jin Q."/>
        </authorList>
    </citation>
    <scope>NUCLEOTIDE SEQUENCE [LARGE SCALE GENOMIC DNA]</scope>
    <source>
        <strain>Sd197</strain>
    </source>
</reference>
<feature type="chain" id="PRO_0000241831" description="UPF0178 protein YaiI">
    <location>
        <begin position="1"/>
        <end position="152"/>
    </location>
</feature>
<gene>
    <name evidence="1" type="primary">yaiI</name>
    <name type="ordered locus">SDY_0357</name>
</gene>
<protein>
    <recommendedName>
        <fullName evidence="1">UPF0178 protein YaiI</fullName>
    </recommendedName>
</protein>
<organism>
    <name type="scientific">Shigella dysenteriae serotype 1 (strain Sd197)</name>
    <dbReference type="NCBI Taxonomy" id="300267"/>
    <lineage>
        <taxon>Bacteria</taxon>
        <taxon>Pseudomonadati</taxon>
        <taxon>Pseudomonadota</taxon>
        <taxon>Gammaproteobacteria</taxon>
        <taxon>Enterobacterales</taxon>
        <taxon>Enterobacteriaceae</taxon>
        <taxon>Shigella</taxon>
    </lineage>
</organism>
<keyword id="KW-1185">Reference proteome</keyword>
<dbReference type="EMBL" id="CP000034">
    <property type="protein sequence ID" value="ABB60572.1"/>
    <property type="status" value="ALT_INIT"/>
    <property type="molecule type" value="Genomic_DNA"/>
</dbReference>
<dbReference type="RefSeq" id="WP_000158159.1">
    <property type="nucleotide sequence ID" value="NC_007606.1"/>
</dbReference>
<dbReference type="RefSeq" id="YP_402060.2">
    <property type="nucleotide sequence ID" value="NC_007606.1"/>
</dbReference>
<dbReference type="STRING" id="300267.SDY_0357"/>
<dbReference type="EnsemblBacteria" id="ABB60572">
    <property type="protein sequence ID" value="ABB60572"/>
    <property type="gene ID" value="SDY_0357"/>
</dbReference>
<dbReference type="KEGG" id="sdy:SDY_0357"/>
<dbReference type="PATRIC" id="fig|300267.13.peg.417"/>
<dbReference type="HOGENOM" id="CLU_106619_1_0_6"/>
<dbReference type="Proteomes" id="UP000002716">
    <property type="component" value="Chromosome"/>
</dbReference>
<dbReference type="CDD" id="cd18720">
    <property type="entry name" value="PIN_YqxD-like"/>
    <property type="match status" value="1"/>
</dbReference>
<dbReference type="HAMAP" id="MF_00489">
    <property type="entry name" value="UPF0178"/>
    <property type="match status" value="1"/>
</dbReference>
<dbReference type="InterPro" id="IPR003791">
    <property type="entry name" value="UPF0178"/>
</dbReference>
<dbReference type="NCBIfam" id="NF001095">
    <property type="entry name" value="PRK00124.1"/>
    <property type="match status" value="1"/>
</dbReference>
<dbReference type="PANTHER" id="PTHR35146">
    <property type="entry name" value="UPF0178 PROTEIN YAII"/>
    <property type="match status" value="1"/>
</dbReference>
<dbReference type="PANTHER" id="PTHR35146:SF1">
    <property type="entry name" value="UPF0178 PROTEIN YAII"/>
    <property type="match status" value="1"/>
</dbReference>
<dbReference type="Pfam" id="PF02639">
    <property type="entry name" value="DUF188"/>
    <property type="match status" value="1"/>
</dbReference>
<proteinExistence type="inferred from homology"/>
<accession>Q32JD6</accession>
<evidence type="ECO:0000255" key="1">
    <source>
        <dbReference type="HAMAP-Rule" id="MF_00489"/>
    </source>
</evidence>
<evidence type="ECO:0000305" key="2"/>
<sequence length="152" mass="16969">MTIWVDADACPNVIKEILYRAAERMQMPLVLVANQSLRVPPSRFIRTLRVAAGFDVADNEIVRQCEAGDLVITADIPLAAEAIEKGAAALNPRGERYTPATIRERLTMRDFMDTLRASGIQTGGPDSLSQRDRQAFAAELEKWWLEVQRSRG</sequence>
<comment type="similarity">
    <text evidence="1">Belongs to the UPF0178 family.</text>
</comment>
<comment type="sequence caution" evidence="2">
    <conflict type="erroneous initiation">
        <sequence resource="EMBL-CDS" id="ABB60572"/>
    </conflict>
</comment>
<name>YAII_SHIDS</name>